<protein>
    <recommendedName>
        <fullName evidence="1">Met repressor</fullName>
    </recommendedName>
    <alternativeName>
        <fullName evidence="1">Met regulon regulatory protein MetJ</fullName>
    </alternativeName>
</protein>
<feature type="chain" id="PRO_1000046497" description="Met repressor">
    <location>
        <begin position="1"/>
        <end position="105"/>
    </location>
</feature>
<comment type="function">
    <text evidence="1">This regulatory protein, when combined with SAM (S-adenosylmethionine) represses the expression of the methionine regulon and of enzymes involved in SAM synthesis.</text>
</comment>
<comment type="subunit">
    <text evidence="1">Homodimer.</text>
</comment>
<comment type="subcellular location">
    <subcellularLocation>
        <location evidence="1">Cytoplasm</location>
    </subcellularLocation>
</comment>
<comment type="domain">
    <text>Does not bind DNA by a helix-turn-helix motif.</text>
</comment>
<comment type="similarity">
    <text evidence="1">Belongs to the MetJ family.</text>
</comment>
<organism>
    <name type="scientific">Shigella dysenteriae serotype 1 (strain Sd197)</name>
    <dbReference type="NCBI Taxonomy" id="300267"/>
    <lineage>
        <taxon>Bacteria</taxon>
        <taxon>Pseudomonadati</taxon>
        <taxon>Pseudomonadota</taxon>
        <taxon>Gammaproteobacteria</taxon>
        <taxon>Enterobacterales</taxon>
        <taxon>Enterobacteriaceae</taxon>
        <taxon>Shigella</taxon>
    </lineage>
</organism>
<gene>
    <name evidence="1" type="primary">metJ</name>
    <name type="ordered locus">SDY_3773</name>
</gene>
<reference key="1">
    <citation type="journal article" date="2005" name="Nucleic Acids Res.">
        <title>Genome dynamics and diversity of Shigella species, the etiologic agents of bacillary dysentery.</title>
        <authorList>
            <person name="Yang F."/>
            <person name="Yang J."/>
            <person name="Zhang X."/>
            <person name="Chen L."/>
            <person name="Jiang Y."/>
            <person name="Yan Y."/>
            <person name="Tang X."/>
            <person name="Wang J."/>
            <person name="Xiong Z."/>
            <person name="Dong J."/>
            <person name="Xue Y."/>
            <person name="Zhu Y."/>
            <person name="Xu X."/>
            <person name="Sun L."/>
            <person name="Chen S."/>
            <person name="Nie H."/>
            <person name="Peng J."/>
            <person name="Xu J."/>
            <person name="Wang Y."/>
            <person name="Yuan Z."/>
            <person name="Wen Y."/>
            <person name="Yao Z."/>
            <person name="Shen Y."/>
            <person name="Qiang B."/>
            <person name="Hou Y."/>
            <person name="Yu J."/>
            <person name="Jin Q."/>
        </authorList>
    </citation>
    <scope>NUCLEOTIDE SEQUENCE [LARGE SCALE GENOMIC DNA]</scope>
    <source>
        <strain>Sd197</strain>
    </source>
</reference>
<dbReference type="EMBL" id="CP000034">
    <property type="protein sequence ID" value="ABB63719.1"/>
    <property type="molecule type" value="Genomic_DNA"/>
</dbReference>
<dbReference type="RefSeq" id="WP_000852812.1">
    <property type="nucleotide sequence ID" value="NC_007606.1"/>
</dbReference>
<dbReference type="RefSeq" id="YP_405210.1">
    <property type="nucleotide sequence ID" value="NC_007606.1"/>
</dbReference>
<dbReference type="SMR" id="Q32AD6"/>
<dbReference type="STRING" id="300267.SDY_3773"/>
<dbReference type="EnsemblBacteria" id="ABB63719">
    <property type="protein sequence ID" value="ABB63719"/>
    <property type="gene ID" value="SDY_3773"/>
</dbReference>
<dbReference type="GeneID" id="93777954"/>
<dbReference type="KEGG" id="sdy:SDY_3773"/>
<dbReference type="PATRIC" id="fig|300267.13.peg.4462"/>
<dbReference type="HOGENOM" id="CLU_142318_0_0_6"/>
<dbReference type="Proteomes" id="UP000002716">
    <property type="component" value="Chromosome"/>
</dbReference>
<dbReference type="GO" id="GO:0005737">
    <property type="term" value="C:cytoplasm"/>
    <property type="evidence" value="ECO:0007669"/>
    <property type="project" value="UniProtKB-SubCell"/>
</dbReference>
<dbReference type="GO" id="GO:0003677">
    <property type="term" value="F:DNA binding"/>
    <property type="evidence" value="ECO:0007669"/>
    <property type="project" value="UniProtKB-KW"/>
</dbReference>
<dbReference type="GO" id="GO:0003700">
    <property type="term" value="F:DNA-binding transcription factor activity"/>
    <property type="evidence" value="ECO:0007669"/>
    <property type="project" value="InterPro"/>
</dbReference>
<dbReference type="GO" id="GO:0009086">
    <property type="term" value="P:methionine biosynthetic process"/>
    <property type="evidence" value="ECO:0007669"/>
    <property type="project" value="UniProtKB-UniRule"/>
</dbReference>
<dbReference type="GO" id="GO:0045892">
    <property type="term" value="P:negative regulation of DNA-templated transcription"/>
    <property type="evidence" value="ECO:0007669"/>
    <property type="project" value="UniProtKB-UniRule"/>
</dbReference>
<dbReference type="CDD" id="cd00490">
    <property type="entry name" value="Met_repressor_MetJ"/>
    <property type="match status" value="1"/>
</dbReference>
<dbReference type="FunFam" id="1.10.140.10:FF:000001">
    <property type="entry name" value="Met repressor"/>
    <property type="match status" value="1"/>
</dbReference>
<dbReference type="Gene3D" id="1.10.140.10">
    <property type="entry name" value="MET Apo-Repressor, subunit A"/>
    <property type="match status" value="1"/>
</dbReference>
<dbReference type="HAMAP" id="MF_00744">
    <property type="entry name" value="MetJ"/>
    <property type="match status" value="1"/>
</dbReference>
<dbReference type="InterPro" id="IPR002084">
    <property type="entry name" value="Met_repressor_MetJ"/>
</dbReference>
<dbReference type="InterPro" id="IPR023453">
    <property type="entry name" value="Met_repressor_MetJ_dom_sf"/>
</dbReference>
<dbReference type="InterPro" id="IPR010985">
    <property type="entry name" value="Ribbon_hlx_hlx"/>
</dbReference>
<dbReference type="NCBIfam" id="NF003622">
    <property type="entry name" value="PRK05264.1"/>
    <property type="match status" value="1"/>
</dbReference>
<dbReference type="Pfam" id="PF01340">
    <property type="entry name" value="MetJ"/>
    <property type="match status" value="1"/>
</dbReference>
<dbReference type="SUPFAM" id="SSF47598">
    <property type="entry name" value="Ribbon-helix-helix"/>
    <property type="match status" value="1"/>
</dbReference>
<evidence type="ECO:0000255" key="1">
    <source>
        <dbReference type="HAMAP-Rule" id="MF_00744"/>
    </source>
</evidence>
<name>METJ_SHIDS</name>
<sequence>MAEWSGEYISPYAEHGKKSEQVKKITVSIPLKVLKILTDERTRRQVNNLRHATNSELLCEAFLHAFTGQPLPDDADLRKERSDEIPEAAKEIMREMGINPETWEY</sequence>
<proteinExistence type="inferred from homology"/>
<accession>Q32AD6</accession>
<keyword id="KW-0028">Amino-acid biosynthesis</keyword>
<keyword id="KW-0963">Cytoplasm</keyword>
<keyword id="KW-0238">DNA-binding</keyword>
<keyword id="KW-0486">Methionine biosynthesis</keyword>
<keyword id="KW-1185">Reference proteome</keyword>
<keyword id="KW-0678">Repressor</keyword>
<keyword id="KW-0804">Transcription</keyword>
<keyword id="KW-0805">Transcription regulation</keyword>